<organism>
    <name type="scientific">Buchnera aphidicola subsp. Cinara cedri (strain Cc)</name>
    <dbReference type="NCBI Taxonomy" id="372461"/>
    <lineage>
        <taxon>Bacteria</taxon>
        <taxon>Pseudomonadati</taxon>
        <taxon>Pseudomonadota</taxon>
        <taxon>Gammaproteobacteria</taxon>
        <taxon>Enterobacterales</taxon>
        <taxon>Erwiniaceae</taxon>
        <taxon>Buchnera</taxon>
    </lineage>
</organism>
<sequence>MRIIMIGPPGSGKGTQTQLLSKYFHIPCISTGEILRKEIKKNKKTKKYIKKTINKGKLIKNSFIIKIIEKNIKKKKFFNGFILDGFPRNIEQAKSLSKKINIEYIIYLKIKYDDIIKRITGRLIHASSGRTYHKIFNPPKIKNKDDITQEKLCSRNDDNEKTIKIRLQEYKKHTNPLIKWIKKKKKIKFIEIHANQSIKIVNKKIIYNINNNNINK</sequence>
<proteinExistence type="inferred from homology"/>
<feature type="chain" id="PRO_1000058794" description="Adenylate kinase">
    <location>
        <begin position="1"/>
        <end position="216"/>
    </location>
</feature>
<feature type="region of interest" description="NMP" evidence="1">
    <location>
        <begin position="30"/>
        <end position="59"/>
    </location>
</feature>
<feature type="region of interest" description="LID">
    <location>
        <begin position="121"/>
        <end position="158"/>
    </location>
</feature>
<feature type="binding site" evidence="1">
    <location>
        <begin position="10"/>
        <end position="15"/>
    </location>
    <ligand>
        <name>ATP</name>
        <dbReference type="ChEBI" id="CHEBI:30616"/>
    </ligand>
</feature>
<feature type="binding site" evidence="1">
    <location>
        <position position="31"/>
    </location>
    <ligand>
        <name>AMP</name>
        <dbReference type="ChEBI" id="CHEBI:456215"/>
    </ligand>
</feature>
<feature type="binding site" evidence="1">
    <location>
        <position position="36"/>
    </location>
    <ligand>
        <name>AMP</name>
        <dbReference type="ChEBI" id="CHEBI:456215"/>
    </ligand>
</feature>
<feature type="binding site" evidence="1">
    <location>
        <begin position="57"/>
        <end position="59"/>
    </location>
    <ligand>
        <name>AMP</name>
        <dbReference type="ChEBI" id="CHEBI:456215"/>
    </ligand>
</feature>
<feature type="binding site" evidence="1">
    <location>
        <begin position="85"/>
        <end position="88"/>
    </location>
    <ligand>
        <name>AMP</name>
        <dbReference type="ChEBI" id="CHEBI:456215"/>
    </ligand>
</feature>
<feature type="binding site" evidence="1">
    <location>
        <position position="92"/>
    </location>
    <ligand>
        <name>AMP</name>
        <dbReference type="ChEBI" id="CHEBI:456215"/>
    </ligand>
</feature>
<feature type="binding site" evidence="1">
    <location>
        <position position="122"/>
    </location>
    <ligand>
        <name>ATP</name>
        <dbReference type="ChEBI" id="CHEBI:30616"/>
    </ligand>
</feature>
<feature type="binding site" evidence="1">
    <location>
        <begin position="131"/>
        <end position="132"/>
    </location>
    <ligand>
        <name>ATP</name>
        <dbReference type="ChEBI" id="CHEBI:30616"/>
    </ligand>
</feature>
<feature type="binding site" evidence="1">
    <location>
        <position position="155"/>
    </location>
    <ligand>
        <name>AMP</name>
        <dbReference type="ChEBI" id="CHEBI:456215"/>
    </ligand>
</feature>
<feature type="binding site" evidence="1">
    <location>
        <position position="166"/>
    </location>
    <ligand>
        <name>AMP</name>
        <dbReference type="ChEBI" id="CHEBI:456215"/>
    </ligand>
</feature>
<feature type="binding site" evidence="1">
    <location>
        <position position="196"/>
    </location>
    <ligand>
        <name>ATP</name>
        <dbReference type="ChEBI" id="CHEBI:30616"/>
    </ligand>
</feature>
<gene>
    <name evidence="1" type="primary">adk</name>
    <name type="ordered locus">BCc_303</name>
</gene>
<reference key="1">
    <citation type="journal article" date="2006" name="Science">
        <title>A small microbial genome: the end of a long symbiotic relationship?</title>
        <authorList>
            <person name="Perez-Brocal V."/>
            <person name="Gil R."/>
            <person name="Ramos S."/>
            <person name="Lamelas A."/>
            <person name="Postigo M."/>
            <person name="Michelena J.M."/>
            <person name="Silva F.J."/>
            <person name="Moya A."/>
            <person name="Latorre A."/>
        </authorList>
    </citation>
    <scope>NUCLEOTIDE SEQUENCE [LARGE SCALE GENOMIC DNA]</scope>
    <source>
        <strain>Cc</strain>
    </source>
</reference>
<keyword id="KW-0067">ATP-binding</keyword>
<keyword id="KW-0963">Cytoplasm</keyword>
<keyword id="KW-0418">Kinase</keyword>
<keyword id="KW-0545">Nucleotide biosynthesis</keyword>
<keyword id="KW-0547">Nucleotide-binding</keyword>
<keyword id="KW-1185">Reference proteome</keyword>
<keyword id="KW-0808">Transferase</keyword>
<accession>Q057D8</accession>
<comment type="function">
    <text evidence="1">Catalyzes the reversible transfer of the terminal phosphate group between ATP and AMP. Plays an important role in cellular energy homeostasis and in adenine nucleotide metabolism.</text>
</comment>
<comment type="catalytic activity">
    <reaction evidence="1">
        <text>AMP + ATP = 2 ADP</text>
        <dbReference type="Rhea" id="RHEA:12973"/>
        <dbReference type="ChEBI" id="CHEBI:30616"/>
        <dbReference type="ChEBI" id="CHEBI:456215"/>
        <dbReference type="ChEBI" id="CHEBI:456216"/>
        <dbReference type="EC" id="2.7.4.3"/>
    </reaction>
</comment>
<comment type="pathway">
    <text evidence="1">Purine metabolism; AMP biosynthesis via salvage pathway; AMP from ADP: step 1/1.</text>
</comment>
<comment type="subunit">
    <text evidence="1">Monomer.</text>
</comment>
<comment type="subcellular location">
    <subcellularLocation>
        <location evidence="1">Cytoplasm</location>
    </subcellularLocation>
</comment>
<comment type="domain">
    <text evidence="1">Consists of three domains, a large central CORE domain and two small peripheral domains, NMPbind and LID, which undergo movements during catalysis. The LID domain closes over the site of phosphoryl transfer upon ATP binding. Assembling and dissambling the active center during each catalytic cycle provides an effective means to prevent ATP hydrolysis.</text>
</comment>
<comment type="similarity">
    <text evidence="1">Belongs to the adenylate kinase family.</text>
</comment>
<protein>
    <recommendedName>
        <fullName evidence="1">Adenylate kinase</fullName>
        <shortName evidence="1">AK</shortName>
        <ecNumber evidence="1">2.7.4.3</ecNumber>
    </recommendedName>
    <alternativeName>
        <fullName evidence="1">ATP-AMP transphosphorylase</fullName>
    </alternativeName>
    <alternativeName>
        <fullName evidence="1">ATP:AMP phosphotransferase</fullName>
    </alternativeName>
    <alternativeName>
        <fullName evidence="1">Adenylate monophosphate kinase</fullName>
    </alternativeName>
</protein>
<dbReference type="EC" id="2.7.4.3" evidence="1"/>
<dbReference type="EMBL" id="CP000263">
    <property type="protein sequence ID" value="ABJ90761.1"/>
    <property type="molecule type" value="Genomic_DNA"/>
</dbReference>
<dbReference type="SMR" id="Q057D8"/>
<dbReference type="STRING" id="372461.BCc_303"/>
<dbReference type="KEGG" id="bcc:BCc_303"/>
<dbReference type="eggNOG" id="COG0563">
    <property type="taxonomic scope" value="Bacteria"/>
</dbReference>
<dbReference type="HOGENOM" id="CLU_032354_1_1_6"/>
<dbReference type="OrthoDB" id="9805030at2"/>
<dbReference type="UniPathway" id="UPA00588">
    <property type="reaction ID" value="UER00649"/>
</dbReference>
<dbReference type="Proteomes" id="UP000000669">
    <property type="component" value="Chromosome"/>
</dbReference>
<dbReference type="GO" id="GO:0005737">
    <property type="term" value="C:cytoplasm"/>
    <property type="evidence" value="ECO:0007669"/>
    <property type="project" value="UniProtKB-SubCell"/>
</dbReference>
<dbReference type="GO" id="GO:0004017">
    <property type="term" value="F:adenylate kinase activity"/>
    <property type="evidence" value="ECO:0007669"/>
    <property type="project" value="UniProtKB-UniRule"/>
</dbReference>
<dbReference type="GO" id="GO:0005524">
    <property type="term" value="F:ATP binding"/>
    <property type="evidence" value="ECO:0007669"/>
    <property type="project" value="UniProtKB-UniRule"/>
</dbReference>
<dbReference type="GO" id="GO:0044209">
    <property type="term" value="P:AMP salvage"/>
    <property type="evidence" value="ECO:0007669"/>
    <property type="project" value="UniProtKB-UniRule"/>
</dbReference>
<dbReference type="CDD" id="cd01428">
    <property type="entry name" value="ADK"/>
    <property type="match status" value="1"/>
</dbReference>
<dbReference type="FunFam" id="3.40.50.300:FF:000106">
    <property type="entry name" value="Adenylate kinase mitochondrial"/>
    <property type="match status" value="1"/>
</dbReference>
<dbReference type="Gene3D" id="3.40.50.300">
    <property type="entry name" value="P-loop containing nucleotide triphosphate hydrolases"/>
    <property type="match status" value="1"/>
</dbReference>
<dbReference type="HAMAP" id="MF_00235">
    <property type="entry name" value="Adenylate_kinase_Adk"/>
    <property type="match status" value="1"/>
</dbReference>
<dbReference type="InterPro" id="IPR006259">
    <property type="entry name" value="Adenyl_kin_sub"/>
</dbReference>
<dbReference type="InterPro" id="IPR000850">
    <property type="entry name" value="Adenylat/UMP-CMP_kin"/>
</dbReference>
<dbReference type="InterPro" id="IPR033690">
    <property type="entry name" value="Adenylat_kinase_CS"/>
</dbReference>
<dbReference type="InterPro" id="IPR007862">
    <property type="entry name" value="Adenylate_kinase_lid-dom"/>
</dbReference>
<dbReference type="InterPro" id="IPR027417">
    <property type="entry name" value="P-loop_NTPase"/>
</dbReference>
<dbReference type="NCBIfam" id="TIGR01351">
    <property type="entry name" value="adk"/>
    <property type="match status" value="1"/>
</dbReference>
<dbReference type="PANTHER" id="PTHR23359">
    <property type="entry name" value="NUCLEOTIDE KINASE"/>
    <property type="match status" value="1"/>
</dbReference>
<dbReference type="Pfam" id="PF00406">
    <property type="entry name" value="ADK"/>
    <property type="match status" value="1"/>
</dbReference>
<dbReference type="Pfam" id="PF05191">
    <property type="entry name" value="ADK_lid"/>
    <property type="match status" value="1"/>
</dbReference>
<dbReference type="PRINTS" id="PR00094">
    <property type="entry name" value="ADENYLTKNASE"/>
</dbReference>
<dbReference type="SUPFAM" id="SSF52540">
    <property type="entry name" value="P-loop containing nucleoside triphosphate hydrolases"/>
    <property type="match status" value="1"/>
</dbReference>
<dbReference type="PROSITE" id="PS00113">
    <property type="entry name" value="ADENYLATE_KINASE"/>
    <property type="match status" value="1"/>
</dbReference>
<name>KAD_BUCCC</name>
<evidence type="ECO:0000255" key="1">
    <source>
        <dbReference type="HAMAP-Rule" id="MF_00235"/>
    </source>
</evidence>